<organism>
    <name type="scientific">Escherichia coli (strain K12)</name>
    <dbReference type="NCBI Taxonomy" id="83333"/>
    <lineage>
        <taxon>Bacteria</taxon>
        <taxon>Pseudomonadati</taxon>
        <taxon>Pseudomonadota</taxon>
        <taxon>Gammaproteobacteria</taxon>
        <taxon>Enterobacterales</taxon>
        <taxon>Enterobacteriaceae</taxon>
        <taxon>Escherichia</taxon>
    </lineage>
</organism>
<proteinExistence type="evidence at protein level"/>
<keyword id="KW-1185">Reference proteome</keyword>
<dbReference type="EMBL" id="U00096">
    <property type="protein sequence ID" value="QNV50545.1"/>
    <property type="molecule type" value="Genomic_DNA"/>
</dbReference>
<dbReference type="InParanoid" id="P0DSH0"/>
<dbReference type="BioCyc" id="EcoCyc:MONOMER0-4504"/>
<dbReference type="Proteomes" id="UP000000625">
    <property type="component" value="Chromosome"/>
</dbReference>
<protein>
    <recommendedName>
        <fullName evidence="2">Protein YriB</fullName>
    </recommendedName>
</protein>
<name>YRIB_ECOLI</name>
<sequence length="17" mass="1904">MVLNVVLAGDFDCVRRP</sequence>
<gene>
    <name evidence="2" type="primary">yriB</name>
    <name evidence="3" type="ordered locus">b4792</name>
</gene>
<comment type="induction">
    <text evidence="1">Expressed in both exponential and stationary phase in rich medium; expression is higher in exponential phase (at protein level).</text>
</comment>
<comment type="miscellaneous">
    <text evidence="1">This gene overlaps yriA on the same strand in another reading frame.</text>
</comment>
<reference key="1">
    <citation type="journal article" date="1997" name="Science">
        <title>The complete genome sequence of Escherichia coli K-12.</title>
        <authorList>
            <person name="Blattner F.R."/>
            <person name="Plunkett G. III"/>
            <person name="Bloch C.A."/>
            <person name="Perna N.T."/>
            <person name="Burland V."/>
            <person name="Riley M."/>
            <person name="Collado-Vides J."/>
            <person name="Glasner J.D."/>
            <person name="Rode C.K."/>
            <person name="Mayhew G.F."/>
            <person name="Gregor J."/>
            <person name="Davis N.W."/>
            <person name="Kirkpatrick H.A."/>
            <person name="Goeden M.A."/>
            <person name="Rose D.J."/>
            <person name="Mau B."/>
            <person name="Shao Y."/>
        </authorList>
    </citation>
    <scope>NUCLEOTIDE SEQUENCE [LARGE SCALE GENOMIC DNA]</scope>
    <source>
        <strain>K12 / MG1655 / ATCC 47076</strain>
    </source>
</reference>
<reference key="2">
    <citation type="journal article" date="2019" name="MBio">
        <title>Identifying small proteins by ribosome profiling with stalled initiation complexes.</title>
        <authorList>
            <person name="Weaver J."/>
            <person name="Mohammad F."/>
            <person name="Buskirk A.R."/>
            <person name="Storz G."/>
        </authorList>
    </citation>
    <scope>IDENTIFICATION</scope>
    <scope>INDUCTION</scope>
    <source>
        <strain>K12 / MG1655 / ATCC 47076</strain>
    </source>
</reference>
<feature type="chain" id="PRO_0000447167" description="Protein YriB">
    <location>
        <begin position="1"/>
        <end position="17"/>
    </location>
</feature>
<accession>P0DSH0</accession>
<accession>A0A7H2C798</accession>
<evidence type="ECO:0000269" key="1">
    <source>
    </source>
</evidence>
<evidence type="ECO:0000303" key="2">
    <source>
    </source>
</evidence>
<evidence type="ECO:0000312" key="3">
    <source>
        <dbReference type="EMBL" id="QNV50545.1"/>
    </source>
</evidence>